<comment type="function">
    <text evidence="1">Part of the ABC transporter complex ModABC involved in molybdenum import. Responsible for energy coupling to the transport system.</text>
</comment>
<comment type="catalytic activity">
    <reaction evidence="1">
        <text>molybdate(out) + ATP + H2O = molybdate(in) + ADP + phosphate + H(+)</text>
        <dbReference type="Rhea" id="RHEA:22020"/>
        <dbReference type="ChEBI" id="CHEBI:15377"/>
        <dbReference type="ChEBI" id="CHEBI:15378"/>
        <dbReference type="ChEBI" id="CHEBI:30616"/>
        <dbReference type="ChEBI" id="CHEBI:36264"/>
        <dbReference type="ChEBI" id="CHEBI:43474"/>
        <dbReference type="ChEBI" id="CHEBI:456216"/>
        <dbReference type="EC" id="7.3.2.5"/>
    </reaction>
</comment>
<comment type="subunit">
    <text evidence="1">The complex is composed of two ATP-binding proteins (ModC), two transmembrane proteins (ModB) and a solute-binding protein (ModA).</text>
</comment>
<comment type="subcellular location">
    <subcellularLocation>
        <location evidence="1">Cell inner membrane</location>
        <topology evidence="1">Peripheral membrane protein</topology>
    </subcellularLocation>
</comment>
<comment type="similarity">
    <text evidence="1">Belongs to the ABC transporter superfamily. Molybdate importer (TC 3.A.1.8) family.</text>
</comment>
<gene>
    <name evidence="1" type="primary">modC</name>
    <name type="ordered locus">PSPPH_2403</name>
</gene>
<accession>Q48J29</accession>
<keyword id="KW-0067">ATP-binding</keyword>
<keyword id="KW-0997">Cell inner membrane</keyword>
<keyword id="KW-1003">Cell membrane</keyword>
<keyword id="KW-0472">Membrane</keyword>
<keyword id="KW-0500">Molybdenum</keyword>
<keyword id="KW-0547">Nucleotide-binding</keyword>
<keyword id="KW-1278">Translocase</keyword>
<keyword id="KW-0813">Transport</keyword>
<organism>
    <name type="scientific">Pseudomonas savastanoi pv. phaseolicola (strain 1448A / Race 6)</name>
    <name type="common">Pseudomonas syringae pv. phaseolicola (strain 1448A / Race 6)</name>
    <dbReference type="NCBI Taxonomy" id="264730"/>
    <lineage>
        <taxon>Bacteria</taxon>
        <taxon>Pseudomonadati</taxon>
        <taxon>Pseudomonadota</taxon>
        <taxon>Gammaproteobacteria</taxon>
        <taxon>Pseudomonadales</taxon>
        <taxon>Pseudomonadaceae</taxon>
        <taxon>Pseudomonas</taxon>
    </lineage>
</organism>
<reference key="1">
    <citation type="journal article" date="2005" name="J. Bacteriol.">
        <title>Whole-genome sequence analysis of Pseudomonas syringae pv. phaseolicola 1448A reveals divergence among pathovars in genes involved in virulence and transposition.</title>
        <authorList>
            <person name="Joardar V."/>
            <person name="Lindeberg M."/>
            <person name="Jackson R.W."/>
            <person name="Selengut J."/>
            <person name="Dodson R."/>
            <person name="Brinkac L.M."/>
            <person name="Daugherty S.C."/>
            <person name="DeBoy R.T."/>
            <person name="Durkin A.S."/>
            <person name="Gwinn Giglio M."/>
            <person name="Madupu R."/>
            <person name="Nelson W.C."/>
            <person name="Rosovitz M.J."/>
            <person name="Sullivan S.A."/>
            <person name="Crabtree J."/>
            <person name="Creasy T."/>
            <person name="Davidsen T.M."/>
            <person name="Haft D.H."/>
            <person name="Zafar N."/>
            <person name="Zhou L."/>
            <person name="Halpin R."/>
            <person name="Holley T."/>
            <person name="Khouri H.M."/>
            <person name="Feldblyum T.V."/>
            <person name="White O."/>
            <person name="Fraser C.M."/>
            <person name="Chatterjee A.K."/>
            <person name="Cartinhour S."/>
            <person name="Schneider D."/>
            <person name="Mansfield J.W."/>
            <person name="Collmer A."/>
            <person name="Buell R."/>
        </authorList>
    </citation>
    <scope>NUCLEOTIDE SEQUENCE [LARGE SCALE GENOMIC DNA]</scope>
    <source>
        <strain>1448A / Race 6</strain>
    </source>
</reference>
<protein>
    <recommendedName>
        <fullName evidence="1">Molybdenum import ATP-binding protein ModC</fullName>
        <ecNumber evidence="1">7.3.2.5</ecNumber>
    </recommendedName>
</protein>
<evidence type="ECO:0000255" key="1">
    <source>
        <dbReference type="HAMAP-Rule" id="MF_01705"/>
    </source>
</evidence>
<evidence type="ECO:0000255" key="2">
    <source>
        <dbReference type="PROSITE-ProRule" id="PRU01213"/>
    </source>
</evidence>
<proteinExistence type="inferred from homology"/>
<dbReference type="EC" id="7.3.2.5" evidence="1"/>
<dbReference type="EMBL" id="CP000058">
    <property type="protein sequence ID" value="AAZ33661.1"/>
    <property type="molecule type" value="Genomic_DNA"/>
</dbReference>
<dbReference type="RefSeq" id="WP_011168559.1">
    <property type="nucleotide sequence ID" value="NC_005773.3"/>
</dbReference>
<dbReference type="SMR" id="Q48J29"/>
<dbReference type="KEGG" id="psp:PSPPH_2403"/>
<dbReference type="eggNOG" id="COG4148">
    <property type="taxonomic scope" value="Bacteria"/>
</dbReference>
<dbReference type="HOGENOM" id="CLU_000604_1_1_6"/>
<dbReference type="Proteomes" id="UP000000551">
    <property type="component" value="Chromosome"/>
</dbReference>
<dbReference type="GO" id="GO:0005886">
    <property type="term" value="C:plasma membrane"/>
    <property type="evidence" value="ECO:0007669"/>
    <property type="project" value="UniProtKB-SubCell"/>
</dbReference>
<dbReference type="GO" id="GO:0015412">
    <property type="term" value="F:ABC-type molybdate transporter activity"/>
    <property type="evidence" value="ECO:0007669"/>
    <property type="project" value="UniProtKB-EC"/>
</dbReference>
<dbReference type="GO" id="GO:0005524">
    <property type="term" value="F:ATP binding"/>
    <property type="evidence" value="ECO:0007669"/>
    <property type="project" value="UniProtKB-KW"/>
</dbReference>
<dbReference type="GO" id="GO:0016887">
    <property type="term" value="F:ATP hydrolysis activity"/>
    <property type="evidence" value="ECO:0007669"/>
    <property type="project" value="InterPro"/>
</dbReference>
<dbReference type="FunFam" id="3.40.50.300:FF:000634">
    <property type="entry name" value="Molybdenum import ATP-binding protein ModC"/>
    <property type="match status" value="1"/>
</dbReference>
<dbReference type="Gene3D" id="2.40.50.100">
    <property type="match status" value="1"/>
</dbReference>
<dbReference type="Gene3D" id="3.40.50.300">
    <property type="entry name" value="P-loop containing nucleotide triphosphate hydrolases"/>
    <property type="match status" value="1"/>
</dbReference>
<dbReference type="InterPro" id="IPR003593">
    <property type="entry name" value="AAA+_ATPase"/>
</dbReference>
<dbReference type="InterPro" id="IPR003439">
    <property type="entry name" value="ABC_transporter-like_ATP-bd"/>
</dbReference>
<dbReference type="InterPro" id="IPR017871">
    <property type="entry name" value="ABC_transporter-like_CS"/>
</dbReference>
<dbReference type="InterPro" id="IPR008995">
    <property type="entry name" value="Mo/tungstate-bd_C_term_dom"/>
</dbReference>
<dbReference type="InterPro" id="IPR011868">
    <property type="entry name" value="ModC_ABC_ATP-bd"/>
</dbReference>
<dbReference type="InterPro" id="IPR050334">
    <property type="entry name" value="Molybdenum_import_ModC"/>
</dbReference>
<dbReference type="InterPro" id="IPR004606">
    <property type="entry name" value="Mop_domain"/>
</dbReference>
<dbReference type="InterPro" id="IPR027417">
    <property type="entry name" value="P-loop_NTPase"/>
</dbReference>
<dbReference type="InterPro" id="IPR005116">
    <property type="entry name" value="Transp-assoc_OB_typ1"/>
</dbReference>
<dbReference type="NCBIfam" id="TIGR02142">
    <property type="entry name" value="modC_ABC"/>
    <property type="match status" value="1"/>
</dbReference>
<dbReference type="PANTHER" id="PTHR43514">
    <property type="entry name" value="ABC TRANSPORTER I FAMILY MEMBER 10"/>
    <property type="match status" value="1"/>
</dbReference>
<dbReference type="PANTHER" id="PTHR43514:SF10">
    <property type="entry name" value="MOLYBDENUM IMPORT ATP-BINDING PROTEIN MODC 2"/>
    <property type="match status" value="1"/>
</dbReference>
<dbReference type="Pfam" id="PF00005">
    <property type="entry name" value="ABC_tran"/>
    <property type="match status" value="1"/>
</dbReference>
<dbReference type="Pfam" id="PF03459">
    <property type="entry name" value="TOBE"/>
    <property type="match status" value="1"/>
</dbReference>
<dbReference type="SMART" id="SM00382">
    <property type="entry name" value="AAA"/>
    <property type="match status" value="1"/>
</dbReference>
<dbReference type="SUPFAM" id="SSF50331">
    <property type="entry name" value="MOP-like"/>
    <property type="match status" value="1"/>
</dbReference>
<dbReference type="SUPFAM" id="SSF52540">
    <property type="entry name" value="P-loop containing nucleoside triphosphate hydrolases"/>
    <property type="match status" value="1"/>
</dbReference>
<dbReference type="PROSITE" id="PS00211">
    <property type="entry name" value="ABC_TRANSPORTER_1"/>
    <property type="match status" value="1"/>
</dbReference>
<dbReference type="PROSITE" id="PS50893">
    <property type="entry name" value="ABC_TRANSPORTER_2"/>
    <property type="match status" value="1"/>
</dbReference>
<dbReference type="PROSITE" id="PS51241">
    <property type="entry name" value="MODC"/>
    <property type="match status" value="1"/>
</dbReference>
<dbReference type="PROSITE" id="PS51866">
    <property type="entry name" value="MOP"/>
    <property type="match status" value="1"/>
</dbReference>
<feature type="chain" id="PRO_0000271679" description="Molybdenum import ATP-binding protein ModC">
    <location>
        <begin position="1"/>
        <end position="362"/>
    </location>
</feature>
<feature type="domain" description="ABC transporter" evidence="1">
    <location>
        <begin position="2"/>
        <end position="236"/>
    </location>
</feature>
<feature type="domain" description="Mop" evidence="2">
    <location>
        <begin position="297"/>
        <end position="362"/>
    </location>
</feature>
<feature type="binding site" evidence="1">
    <location>
        <begin position="34"/>
        <end position="41"/>
    </location>
    <ligand>
        <name>ATP</name>
        <dbReference type="ChEBI" id="CHEBI:30616"/>
    </ligand>
</feature>
<name>MODC_PSE14</name>
<sequence length="362" mass="39796">MASPIEVRLHMTYPDFTVRTDLTLPGSGITALFGPSGSGKTTCLRCIAGLEKAGQGFIRVHDEVWQDTEKGVFLAPHKRAIGYVFQEASLFPHLSVRANLEFGMKRIPRQQRNIQLPQATELLGIDHLLERSPDKLSGGERQRVGIARALLTSPRLMLLDEPLAALDARRKSEILPYLERLHRELDIPMLYVSHAQDEVARLADHLVLLEAGNVLASGPIRETLARLDLPLAMGGDAGVVIEGTVSAYDRNYQLLSVTLPDSTLCMRVAHAEMQIGTLLRVKVQARDVSLNLQPDDQSSILNRLPVTVMEEALADNSAHVLVKLDAGGTPLLARITRYSSDQLNLHRGQSLWAQIKAVAVLA</sequence>